<reference key="1">
    <citation type="journal article" date="2000" name="Nature">
        <title>The genome sequence of the plant pathogen Xylella fastidiosa.</title>
        <authorList>
            <person name="Simpson A.J.G."/>
            <person name="Reinach F.C."/>
            <person name="Arruda P."/>
            <person name="Abreu F.A."/>
            <person name="Acencio M."/>
            <person name="Alvarenga R."/>
            <person name="Alves L.M.C."/>
            <person name="Araya J.E."/>
            <person name="Baia G.S."/>
            <person name="Baptista C.S."/>
            <person name="Barros M.H."/>
            <person name="Bonaccorsi E.D."/>
            <person name="Bordin S."/>
            <person name="Bove J.M."/>
            <person name="Briones M.R.S."/>
            <person name="Bueno M.R.P."/>
            <person name="Camargo A.A."/>
            <person name="Camargo L.E.A."/>
            <person name="Carraro D.M."/>
            <person name="Carrer H."/>
            <person name="Colauto N.B."/>
            <person name="Colombo C."/>
            <person name="Costa F.F."/>
            <person name="Costa M.C.R."/>
            <person name="Costa-Neto C.M."/>
            <person name="Coutinho L.L."/>
            <person name="Cristofani M."/>
            <person name="Dias-Neto E."/>
            <person name="Docena C."/>
            <person name="El-Dorry H."/>
            <person name="Facincani A.P."/>
            <person name="Ferreira A.J.S."/>
            <person name="Ferreira V.C.A."/>
            <person name="Ferro J.A."/>
            <person name="Fraga J.S."/>
            <person name="Franca S.C."/>
            <person name="Franco M.C."/>
            <person name="Frohme M."/>
            <person name="Furlan L.R."/>
            <person name="Garnier M."/>
            <person name="Goldman G.H."/>
            <person name="Goldman M.H.S."/>
            <person name="Gomes S.L."/>
            <person name="Gruber A."/>
            <person name="Ho P.L."/>
            <person name="Hoheisel J.D."/>
            <person name="Junqueira M.L."/>
            <person name="Kemper E.L."/>
            <person name="Kitajima J.P."/>
            <person name="Krieger J.E."/>
            <person name="Kuramae E.E."/>
            <person name="Laigret F."/>
            <person name="Lambais M.R."/>
            <person name="Leite L.C.C."/>
            <person name="Lemos E.G.M."/>
            <person name="Lemos M.V.F."/>
            <person name="Lopes S.A."/>
            <person name="Lopes C.R."/>
            <person name="Machado J.A."/>
            <person name="Machado M.A."/>
            <person name="Madeira A.M.B.N."/>
            <person name="Madeira H.M.F."/>
            <person name="Marino C.L."/>
            <person name="Marques M.V."/>
            <person name="Martins E.A.L."/>
            <person name="Martins E.M.F."/>
            <person name="Matsukuma A.Y."/>
            <person name="Menck C.F.M."/>
            <person name="Miracca E.C."/>
            <person name="Miyaki C.Y."/>
            <person name="Monteiro-Vitorello C.B."/>
            <person name="Moon D.H."/>
            <person name="Nagai M.A."/>
            <person name="Nascimento A.L.T.O."/>
            <person name="Netto L.E.S."/>
            <person name="Nhani A. Jr."/>
            <person name="Nobrega F.G."/>
            <person name="Nunes L.R."/>
            <person name="Oliveira M.A."/>
            <person name="de Oliveira M.C."/>
            <person name="de Oliveira R.C."/>
            <person name="Palmieri D.A."/>
            <person name="Paris A."/>
            <person name="Peixoto B.R."/>
            <person name="Pereira G.A.G."/>
            <person name="Pereira H.A. Jr."/>
            <person name="Pesquero J.B."/>
            <person name="Quaggio R.B."/>
            <person name="Roberto P.G."/>
            <person name="Rodrigues V."/>
            <person name="de Rosa A.J.M."/>
            <person name="de Rosa V.E. Jr."/>
            <person name="de Sa R.G."/>
            <person name="Santelli R.V."/>
            <person name="Sawasaki H.E."/>
            <person name="da Silva A.C.R."/>
            <person name="da Silva A.M."/>
            <person name="da Silva F.R."/>
            <person name="Silva W.A. Jr."/>
            <person name="da Silveira J.F."/>
            <person name="Silvestri M.L.Z."/>
            <person name="Siqueira W.J."/>
            <person name="de Souza A.A."/>
            <person name="de Souza A.P."/>
            <person name="Terenzi M.F."/>
            <person name="Truffi D."/>
            <person name="Tsai S.M."/>
            <person name="Tsuhako M.H."/>
            <person name="Vallada H."/>
            <person name="Van Sluys M.A."/>
            <person name="Verjovski-Almeida S."/>
            <person name="Vettore A.L."/>
            <person name="Zago M.A."/>
            <person name="Zatz M."/>
            <person name="Meidanis J."/>
            <person name="Setubal J.C."/>
        </authorList>
    </citation>
    <scope>NUCLEOTIDE SEQUENCE [LARGE SCALE GENOMIC DNA]</scope>
    <source>
        <strain>9a5c</strain>
    </source>
</reference>
<reference key="2">
    <citation type="journal article" date="2007" name="J. Bacteriol.">
        <title>BigR, a transcriptional repressor from plant-associated bacteria, regulates an operon implicated in biofilm growth.</title>
        <authorList>
            <person name="Barbosa R.L."/>
            <person name="Benedetti C.E."/>
        </authorList>
    </citation>
    <scope>INDUCTION BY BIGR</scope>
    <source>
        <strain>9a5c</strain>
    </source>
</reference>
<feature type="chain" id="PRO_0000305339" description="Beta-lactamase hydrolase-like protein">
    <location>
        <begin position="1"/>
        <end position="431"/>
    </location>
</feature>
<feature type="binding site" evidence="1">
    <location>
        <position position="212"/>
    </location>
    <ligand>
        <name>Zn(2+)</name>
        <dbReference type="ChEBI" id="CHEBI:29105"/>
    </ligand>
</feature>
<feature type="binding site" evidence="1">
    <location>
        <position position="214"/>
    </location>
    <ligand>
        <name>Zn(2+)</name>
        <dbReference type="ChEBI" id="CHEBI:29105"/>
    </ligand>
</feature>
<feature type="binding site" evidence="1">
    <location>
        <position position="286"/>
    </location>
    <ligand>
        <name>Zn(2+)</name>
        <dbReference type="ChEBI" id="CHEBI:29105"/>
    </ligand>
</feature>
<feature type="binding site" evidence="1">
    <location>
        <position position="309"/>
    </location>
    <ligand>
        <name>substrate</name>
    </ligand>
</feature>
<comment type="function">
    <text evidence="5">Could play a role in cell adherence or biofilm development.</text>
</comment>
<comment type="cofactor">
    <cofactor evidence="1">
        <name>Zn(2+)</name>
        <dbReference type="ChEBI" id="CHEBI:29105"/>
    </cofactor>
</comment>
<comment type="induction">
    <text evidence="2">Repressed by BigR.</text>
</comment>
<comment type="miscellaneous">
    <text evidence="2">Part of an operon that comprises bigR, XF_0764, XF_0765 and XF_0766.</text>
</comment>
<comment type="similarity">
    <text evidence="4">Belongs to the metallo-beta-lactamase superfamily.</text>
</comment>
<evidence type="ECO:0000250" key="1">
    <source>
        <dbReference type="UniProtKB" id="P25910"/>
    </source>
</evidence>
<evidence type="ECO:0000269" key="2">
    <source>
    </source>
</evidence>
<evidence type="ECO:0000303" key="3">
    <source>
    </source>
</evidence>
<evidence type="ECO:0000305" key="4"/>
<evidence type="ECO:0000305" key="5">
    <source>
    </source>
</evidence>
<organism>
    <name type="scientific">Xylella fastidiosa (strain 9a5c)</name>
    <dbReference type="NCBI Taxonomy" id="160492"/>
    <lineage>
        <taxon>Bacteria</taxon>
        <taxon>Pseudomonadati</taxon>
        <taxon>Pseudomonadota</taxon>
        <taxon>Gammaproteobacteria</taxon>
        <taxon>Lysobacterales</taxon>
        <taxon>Lysobacteraceae</taxon>
        <taxon>Xylella</taxon>
    </lineage>
</organism>
<protein>
    <recommendedName>
        <fullName evidence="3">Beta-lactamase hydrolase-like protein</fullName>
        <shortName evidence="3">BLH</shortName>
        <ecNumber>3.-.-.-</ecNumber>
    </recommendedName>
</protein>
<dbReference type="EC" id="3.-.-.-"/>
<dbReference type="EMBL" id="AE003849">
    <property type="protein sequence ID" value="AAF83578.1"/>
    <property type="molecule type" value="Genomic_DNA"/>
</dbReference>
<dbReference type="PIR" id="E82766">
    <property type="entry name" value="E82766"/>
</dbReference>
<dbReference type="RefSeq" id="WP_010893291.1">
    <property type="nucleotide sequence ID" value="NC_002488.3"/>
</dbReference>
<dbReference type="SMR" id="Q9PFB0"/>
<dbReference type="STRING" id="160492.XF_0768"/>
<dbReference type="KEGG" id="xfa:XF_0768"/>
<dbReference type="eggNOG" id="COG0491">
    <property type="taxonomic scope" value="Bacteria"/>
</dbReference>
<dbReference type="eggNOG" id="COG3453">
    <property type="taxonomic scope" value="Bacteria"/>
</dbReference>
<dbReference type="HOGENOM" id="CLU_030571_9_1_6"/>
<dbReference type="Proteomes" id="UP000000812">
    <property type="component" value="Chromosome"/>
</dbReference>
<dbReference type="GO" id="GO:0016787">
    <property type="term" value="F:hydrolase activity"/>
    <property type="evidence" value="ECO:0007669"/>
    <property type="project" value="UniProtKB-KW"/>
</dbReference>
<dbReference type="GO" id="GO:0046872">
    <property type="term" value="F:metal ion binding"/>
    <property type="evidence" value="ECO:0007669"/>
    <property type="project" value="UniProtKB-KW"/>
</dbReference>
<dbReference type="GO" id="GO:0050313">
    <property type="term" value="F:sulfur dioxygenase activity"/>
    <property type="evidence" value="ECO:0007669"/>
    <property type="project" value="InterPro"/>
</dbReference>
<dbReference type="GO" id="GO:0006749">
    <property type="term" value="P:glutathione metabolic process"/>
    <property type="evidence" value="ECO:0007669"/>
    <property type="project" value="InterPro"/>
</dbReference>
<dbReference type="GO" id="GO:0070813">
    <property type="term" value="P:hydrogen sulfide metabolic process"/>
    <property type="evidence" value="ECO:0007669"/>
    <property type="project" value="TreeGrafter"/>
</dbReference>
<dbReference type="CDD" id="cd07724">
    <property type="entry name" value="POD-like_MBL-fold"/>
    <property type="match status" value="1"/>
</dbReference>
<dbReference type="CDD" id="cd14503">
    <property type="entry name" value="PTP-bact"/>
    <property type="match status" value="1"/>
</dbReference>
<dbReference type="Gene3D" id="3.90.190.10">
    <property type="entry name" value="Protein tyrosine phosphatase superfamily"/>
    <property type="match status" value="1"/>
</dbReference>
<dbReference type="Gene3D" id="3.60.15.10">
    <property type="entry name" value="Ribonuclease Z/Hydroxyacylglutathione hydrolase-like"/>
    <property type="match status" value="1"/>
</dbReference>
<dbReference type="InterPro" id="IPR005939">
    <property type="entry name" value="BLH_phosphatase-like"/>
</dbReference>
<dbReference type="InterPro" id="IPR053449">
    <property type="entry name" value="MBL-like_hydrolase"/>
</dbReference>
<dbReference type="InterPro" id="IPR001279">
    <property type="entry name" value="Metallo-B-lactamas"/>
</dbReference>
<dbReference type="InterPro" id="IPR051682">
    <property type="entry name" value="Mito_Persulfide_Diox"/>
</dbReference>
<dbReference type="InterPro" id="IPR044528">
    <property type="entry name" value="POD-like_MBL-fold"/>
</dbReference>
<dbReference type="InterPro" id="IPR029021">
    <property type="entry name" value="Prot-tyrosine_phosphatase-like"/>
</dbReference>
<dbReference type="InterPro" id="IPR036866">
    <property type="entry name" value="RibonucZ/Hydroxyglut_hydro"/>
</dbReference>
<dbReference type="NCBIfam" id="NF040641">
    <property type="entry name" value="bifunc_ST_SDO"/>
    <property type="match status" value="1"/>
</dbReference>
<dbReference type="NCBIfam" id="TIGR01244">
    <property type="entry name" value="TIGR01244 family sulfur transferase"/>
    <property type="match status" value="1"/>
</dbReference>
<dbReference type="PANTHER" id="PTHR43084">
    <property type="entry name" value="PERSULFIDE DIOXYGENASE ETHE1"/>
    <property type="match status" value="1"/>
</dbReference>
<dbReference type="PANTHER" id="PTHR43084:SF1">
    <property type="entry name" value="PERSULFIDE DIOXYGENASE ETHE1, MITOCHONDRIAL"/>
    <property type="match status" value="1"/>
</dbReference>
<dbReference type="Pfam" id="PF04273">
    <property type="entry name" value="BLH_phosphatase"/>
    <property type="match status" value="1"/>
</dbReference>
<dbReference type="Pfam" id="PF00753">
    <property type="entry name" value="Lactamase_B"/>
    <property type="match status" value="1"/>
</dbReference>
<dbReference type="SMART" id="SM00849">
    <property type="entry name" value="Lactamase_B"/>
    <property type="match status" value="1"/>
</dbReference>
<dbReference type="SUPFAM" id="SSF52799">
    <property type="entry name" value="(Phosphotyrosine protein) phosphatases II"/>
    <property type="match status" value="1"/>
</dbReference>
<dbReference type="SUPFAM" id="SSF56281">
    <property type="entry name" value="Metallo-hydrolase/oxidoreductase"/>
    <property type="match status" value="1"/>
</dbReference>
<sequence length="431" mass="47530">MRIVDINERLAISGQPNTDEFINFARRGYRSIINLRPDGEEPNQPGNDAEQAAARRAGLAYNFVPVIGTSITEADIQAFQRAIATTEGSVLVHCKSGTRALMLYALSEVIDGRMKRDEVEALGHAHGFDLGRAVTWLERQAIQTPRVSGFFDPRTSSIQYVVTDQTTKRCAIIDPVLDFDEKSGATATTNADAILAHVEQQGLTVEWILDTHPHADHFSAAQYLKQRTGAPTAIGTHVTEVQRLWREIYNWPTLSANGSQWDHLFADGDVFNVGSIKGRVMFSPGHTLASVTYVIGDTAFVHDTIFMPDAGTARADFPGGSARALWSSIQTILSLPDETRLFTGHDYQPSGRHPRWESTVGEQKKANPHLAGVDETTFVALREARDKTLPMPKLILHALQVNVLGGRLPEPETNGRRYLKFPLNALEGAAW</sequence>
<proteinExistence type="evidence at transcript level"/>
<keyword id="KW-0378">Hydrolase</keyword>
<keyword id="KW-0479">Metal-binding</keyword>
<keyword id="KW-0862">Zinc</keyword>
<name>BLH_XYLFA</name>
<accession>Q9PFB0</accession>
<gene>
    <name evidence="3" type="primary">blh</name>
    <name type="ordered locus">XF_0768</name>
</gene>